<gene>
    <name evidence="1" type="primary">fusA</name>
    <name type="ordered locus">BCB4264_A0128</name>
</gene>
<accession>B7HJ45</accession>
<sequence>MAREFSLENTRNIGIMAHIDAGKTTATERILYYTGRIHKIGETHEGASQMDWMEQEQERGITITSAATTAQWKGHRVNIIDTPGHVDFTVEVERSLRVLDGAVAVLDAQSGVEPQTETVWRQATTYGVPRIVFVNKMDKIGADFLYSVGTIHDRLQANAHPIQLPIGAEDEFNGIIDLVEECAYMYGNDLGTDIQRVEIPEEHKELAEEYRGKLIEAVAELDEEMMMKYLEGEEITVEELKAGIRKATTSVEFFPVICGSAFKNKGVQILLDAVIDYLPSPLDVPAIKGTLPDTDEEVERKSSDEEPFAALAFKIMTDPYVGKLTFFRVYSGVLNSGSYVKNSTKGKRERVGRILQMHANSREEISTVYAGDIAAAVGLKDTTTGDTLCDEKSLVILESMEFPEPVISVAIEPKSKADQDKMGTALSKLSEEDPTFRAHTDQETGQTIIAGMGELHLDIIVDRMRREFKVEANVGAPQVAYRETFRAAAKVEGKFARQSGGRGQFGHVWIEFEPNEEGKGFEFENKIVGGVVPREYIPAVGAGLEDALKNGVLAGYPLVDIKAALVDGSYHDVDSSEMAFKIAASMALKAAVSKCSPVILEPMMKVEVVIPEEYMGDIMGDVTSRRGRVEGMEARGNAQVVRAMVPLSEMFGYATSLRSNTQGRGTFSMVFDHYEEVPKSVSEEIIKKNKGE</sequence>
<evidence type="ECO:0000255" key="1">
    <source>
        <dbReference type="HAMAP-Rule" id="MF_00054"/>
    </source>
</evidence>
<keyword id="KW-0963">Cytoplasm</keyword>
<keyword id="KW-0251">Elongation factor</keyword>
<keyword id="KW-0342">GTP-binding</keyword>
<keyword id="KW-0547">Nucleotide-binding</keyword>
<keyword id="KW-0648">Protein biosynthesis</keyword>
<dbReference type="EMBL" id="CP001176">
    <property type="protein sequence ID" value="ACK60677.1"/>
    <property type="molecule type" value="Genomic_DNA"/>
</dbReference>
<dbReference type="RefSeq" id="WP_000090370.1">
    <property type="nucleotide sequence ID" value="NZ_VEHB01000017.1"/>
</dbReference>
<dbReference type="SMR" id="B7HJ45"/>
<dbReference type="GeneID" id="93010946"/>
<dbReference type="KEGG" id="bcb:BCB4264_A0128"/>
<dbReference type="HOGENOM" id="CLU_002794_4_1_9"/>
<dbReference type="Proteomes" id="UP000007096">
    <property type="component" value="Chromosome"/>
</dbReference>
<dbReference type="GO" id="GO:0005737">
    <property type="term" value="C:cytoplasm"/>
    <property type="evidence" value="ECO:0007669"/>
    <property type="project" value="UniProtKB-SubCell"/>
</dbReference>
<dbReference type="GO" id="GO:0005525">
    <property type="term" value="F:GTP binding"/>
    <property type="evidence" value="ECO:0007669"/>
    <property type="project" value="UniProtKB-UniRule"/>
</dbReference>
<dbReference type="GO" id="GO:0003924">
    <property type="term" value="F:GTPase activity"/>
    <property type="evidence" value="ECO:0007669"/>
    <property type="project" value="InterPro"/>
</dbReference>
<dbReference type="GO" id="GO:0003746">
    <property type="term" value="F:translation elongation factor activity"/>
    <property type="evidence" value="ECO:0007669"/>
    <property type="project" value="UniProtKB-UniRule"/>
</dbReference>
<dbReference type="GO" id="GO:0032790">
    <property type="term" value="P:ribosome disassembly"/>
    <property type="evidence" value="ECO:0007669"/>
    <property type="project" value="TreeGrafter"/>
</dbReference>
<dbReference type="CDD" id="cd01886">
    <property type="entry name" value="EF-G"/>
    <property type="match status" value="1"/>
</dbReference>
<dbReference type="CDD" id="cd16262">
    <property type="entry name" value="EFG_III"/>
    <property type="match status" value="1"/>
</dbReference>
<dbReference type="CDD" id="cd01434">
    <property type="entry name" value="EFG_mtEFG1_IV"/>
    <property type="match status" value="1"/>
</dbReference>
<dbReference type="CDD" id="cd03713">
    <property type="entry name" value="EFG_mtEFG_C"/>
    <property type="match status" value="1"/>
</dbReference>
<dbReference type="CDD" id="cd04088">
    <property type="entry name" value="EFG_mtEFG_II"/>
    <property type="match status" value="1"/>
</dbReference>
<dbReference type="FunFam" id="2.40.30.10:FF:000006">
    <property type="entry name" value="Elongation factor G"/>
    <property type="match status" value="1"/>
</dbReference>
<dbReference type="FunFam" id="3.30.230.10:FF:000003">
    <property type="entry name" value="Elongation factor G"/>
    <property type="match status" value="1"/>
</dbReference>
<dbReference type="FunFam" id="3.30.70.240:FF:000001">
    <property type="entry name" value="Elongation factor G"/>
    <property type="match status" value="1"/>
</dbReference>
<dbReference type="FunFam" id="3.30.70.870:FF:000001">
    <property type="entry name" value="Elongation factor G"/>
    <property type="match status" value="1"/>
</dbReference>
<dbReference type="FunFam" id="3.40.50.300:FF:000029">
    <property type="entry name" value="Elongation factor G"/>
    <property type="match status" value="1"/>
</dbReference>
<dbReference type="Gene3D" id="3.30.230.10">
    <property type="match status" value="1"/>
</dbReference>
<dbReference type="Gene3D" id="3.30.70.240">
    <property type="match status" value="1"/>
</dbReference>
<dbReference type="Gene3D" id="3.30.70.870">
    <property type="entry name" value="Elongation Factor G (Translational Gtpase), domain 3"/>
    <property type="match status" value="1"/>
</dbReference>
<dbReference type="Gene3D" id="3.40.50.300">
    <property type="entry name" value="P-loop containing nucleotide triphosphate hydrolases"/>
    <property type="match status" value="1"/>
</dbReference>
<dbReference type="Gene3D" id="2.40.30.10">
    <property type="entry name" value="Translation factors"/>
    <property type="match status" value="1"/>
</dbReference>
<dbReference type="HAMAP" id="MF_00054_B">
    <property type="entry name" value="EF_G_EF_2_B"/>
    <property type="match status" value="1"/>
</dbReference>
<dbReference type="InterPro" id="IPR041095">
    <property type="entry name" value="EFG_II"/>
</dbReference>
<dbReference type="InterPro" id="IPR009022">
    <property type="entry name" value="EFG_III"/>
</dbReference>
<dbReference type="InterPro" id="IPR035647">
    <property type="entry name" value="EFG_III/V"/>
</dbReference>
<dbReference type="InterPro" id="IPR047872">
    <property type="entry name" value="EFG_IV"/>
</dbReference>
<dbReference type="InterPro" id="IPR035649">
    <property type="entry name" value="EFG_V"/>
</dbReference>
<dbReference type="InterPro" id="IPR000640">
    <property type="entry name" value="EFG_V-like"/>
</dbReference>
<dbReference type="InterPro" id="IPR004161">
    <property type="entry name" value="EFTu-like_2"/>
</dbReference>
<dbReference type="InterPro" id="IPR031157">
    <property type="entry name" value="G_TR_CS"/>
</dbReference>
<dbReference type="InterPro" id="IPR027417">
    <property type="entry name" value="P-loop_NTPase"/>
</dbReference>
<dbReference type="InterPro" id="IPR020568">
    <property type="entry name" value="Ribosomal_Su5_D2-typ_SF"/>
</dbReference>
<dbReference type="InterPro" id="IPR014721">
    <property type="entry name" value="Ribsml_uS5_D2-typ_fold_subgr"/>
</dbReference>
<dbReference type="InterPro" id="IPR005225">
    <property type="entry name" value="Small_GTP-bd"/>
</dbReference>
<dbReference type="InterPro" id="IPR000795">
    <property type="entry name" value="T_Tr_GTP-bd_dom"/>
</dbReference>
<dbReference type="InterPro" id="IPR009000">
    <property type="entry name" value="Transl_B-barrel_sf"/>
</dbReference>
<dbReference type="InterPro" id="IPR004540">
    <property type="entry name" value="Transl_elong_EFG/EF2"/>
</dbReference>
<dbReference type="InterPro" id="IPR005517">
    <property type="entry name" value="Transl_elong_EFG/EF2_IV"/>
</dbReference>
<dbReference type="NCBIfam" id="TIGR00484">
    <property type="entry name" value="EF-G"/>
    <property type="match status" value="1"/>
</dbReference>
<dbReference type="NCBIfam" id="NF009379">
    <property type="entry name" value="PRK12740.1-3"/>
    <property type="match status" value="1"/>
</dbReference>
<dbReference type="NCBIfam" id="NF009381">
    <property type="entry name" value="PRK12740.1-5"/>
    <property type="match status" value="1"/>
</dbReference>
<dbReference type="NCBIfam" id="NF009891">
    <property type="entry name" value="PRK13351.1-1"/>
    <property type="match status" value="1"/>
</dbReference>
<dbReference type="NCBIfam" id="TIGR00231">
    <property type="entry name" value="small_GTP"/>
    <property type="match status" value="1"/>
</dbReference>
<dbReference type="PANTHER" id="PTHR43261:SF1">
    <property type="entry name" value="RIBOSOME-RELEASING FACTOR 2, MITOCHONDRIAL"/>
    <property type="match status" value="1"/>
</dbReference>
<dbReference type="PANTHER" id="PTHR43261">
    <property type="entry name" value="TRANSLATION ELONGATION FACTOR G-RELATED"/>
    <property type="match status" value="1"/>
</dbReference>
<dbReference type="Pfam" id="PF00679">
    <property type="entry name" value="EFG_C"/>
    <property type="match status" value="1"/>
</dbReference>
<dbReference type="Pfam" id="PF14492">
    <property type="entry name" value="EFG_III"/>
    <property type="match status" value="1"/>
</dbReference>
<dbReference type="Pfam" id="PF03764">
    <property type="entry name" value="EFG_IV"/>
    <property type="match status" value="1"/>
</dbReference>
<dbReference type="Pfam" id="PF00009">
    <property type="entry name" value="GTP_EFTU"/>
    <property type="match status" value="1"/>
</dbReference>
<dbReference type="Pfam" id="PF03144">
    <property type="entry name" value="GTP_EFTU_D2"/>
    <property type="match status" value="1"/>
</dbReference>
<dbReference type="PRINTS" id="PR00315">
    <property type="entry name" value="ELONGATNFCT"/>
</dbReference>
<dbReference type="SMART" id="SM00838">
    <property type="entry name" value="EFG_C"/>
    <property type="match status" value="1"/>
</dbReference>
<dbReference type="SMART" id="SM00889">
    <property type="entry name" value="EFG_IV"/>
    <property type="match status" value="1"/>
</dbReference>
<dbReference type="SUPFAM" id="SSF54980">
    <property type="entry name" value="EF-G C-terminal domain-like"/>
    <property type="match status" value="2"/>
</dbReference>
<dbReference type="SUPFAM" id="SSF52540">
    <property type="entry name" value="P-loop containing nucleoside triphosphate hydrolases"/>
    <property type="match status" value="1"/>
</dbReference>
<dbReference type="SUPFAM" id="SSF54211">
    <property type="entry name" value="Ribosomal protein S5 domain 2-like"/>
    <property type="match status" value="1"/>
</dbReference>
<dbReference type="SUPFAM" id="SSF50447">
    <property type="entry name" value="Translation proteins"/>
    <property type="match status" value="1"/>
</dbReference>
<dbReference type="PROSITE" id="PS00301">
    <property type="entry name" value="G_TR_1"/>
    <property type="match status" value="1"/>
</dbReference>
<dbReference type="PROSITE" id="PS51722">
    <property type="entry name" value="G_TR_2"/>
    <property type="match status" value="1"/>
</dbReference>
<feature type="chain" id="PRO_1000201437" description="Elongation factor G">
    <location>
        <begin position="1"/>
        <end position="692"/>
    </location>
</feature>
<feature type="domain" description="tr-type G">
    <location>
        <begin position="8"/>
        <end position="282"/>
    </location>
</feature>
<feature type="binding site" evidence="1">
    <location>
        <begin position="17"/>
        <end position="24"/>
    </location>
    <ligand>
        <name>GTP</name>
        <dbReference type="ChEBI" id="CHEBI:37565"/>
    </ligand>
</feature>
<feature type="binding site" evidence="1">
    <location>
        <begin position="81"/>
        <end position="85"/>
    </location>
    <ligand>
        <name>GTP</name>
        <dbReference type="ChEBI" id="CHEBI:37565"/>
    </ligand>
</feature>
<feature type="binding site" evidence="1">
    <location>
        <begin position="135"/>
        <end position="138"/>
    </location>
    <ligand>
        <name>GTP</name>
        <dbReference type="ChEBI" id="CHEBI:37565"/>
    </ligand>
</feature>
<reference key="1">
    <citation type="submission" date="2008-10" db="EMBL/GenBank/DDBJ databases">
        <title>Genome sequence of Bacillus cereus B4264.</title>
        <authorList>
            <person name="Dodson R.J."/>
            <person name="Durkin A.S."/>
            <person name="Rosovitz M.J."/>
            <person name="Rasko D.A."/>
            <person name="Hoffmaster A."/>
            <person name="Ravel J."/>
            <person name="Sutton G."/>
        </authorList>
    </citation>
    <scope>NUCLEOTIDE SEQUENCE [LARGE SCALE GENOMIC DNA]</scope>
    <source>
        <strain>B4264</strain>
    </source>
</reference>
<name>EFG_BACC4</name>
<comment type="function">
    <text evidence="1">Catalyzes the GTP-dependent ribosomal translocation step during translation elongation. During this step, the ribosome changes from the pre-translocational (PRE) to the post-translocational (POST) state as the newly formed A-site-bound peptidyl-tRNA and P-site-bound deacylated tRNA move to the P and E sites, respectively. Catalyzes the coordinated movement of the two tRNA molecules, the mRNA and conformational changes in the ribosome.</text>
</comment>
<comment type="subcellular location">
    <subcellularLocation>
        <location evidence="1">Cytoplasm</location>
    </subcellularLocation>
</comment>
<comment type="similarity">
    <text evidence="1">Belongs to the TRAFAC class translation factor GTPase superfamily. Classic translation factor GTPase family. EF-G/EF-2 subfamily.</text>
</comment>
<proteinExistence type="inferred from homology"/>
<organism>
    <name type="scientific">Bacillus cereus (strain B4264)</name>
    <dbReference type="NCBI Taxonomy" id="405532"/>
    <lineage>
        <taxon>Bacteria</taxon>
        <taxon>Bacillati</taxon>
        <taxon>Bacillota</taxon>
        <taxon>Bacilli</taxon>
        <taxon>Bacillales</taxon>
        <taxon>Bacillaceae</taxon>
        <taxon>Bacillus</taxon>
        <taxon>Bacillus cereus group</taxon>
    </lineage>
</organism>
<protein>
    <recommendedName>
        <fullName evidence="1">Elongation factor G</fullName>
        <shortName evidence="1">EF-G</shortName>
    </recommendedName>
</protein>